<reference key="1">
    <citation type="journal article" date="2005" name="Science">
        <title>The transcriptional landscape of the mammalian genome.</title>
        <authorList>
            <person name="Carninci P."/>
            <person name="Kasukawa T."/>
            <person name="Katayama S."/>
            <person name="Gough J."/>
            <person name="Frith M.C."/>
            <person name="Maeda N."/>
            <person name="Oyama R."/>
            <person name="Ravasi T."/>
            <person name="Lenhard B."/>
            <person name="Wells C."/>
            <person name="Kodzius R."/>
            <person name="Shimokawa K."/>
            <person name="Bajic V.B."/>
            <person name="Brenner S.E."/>
            <person name="Batalov S."/>
            <person name="Forrest A.R."/>
            <person name="Zavolan M."/>
            <person name="Davis M.J."/>
            <person name="Wilming L.G."/>
            <person name="Aidinis V."/>
            <person name="Allen J.E."/>
            <person name="Ambesi-Impiombato A."/>
            <person name="Apweiler R."/>
            <person name="Aturaliya R.N."/>
            <person name="Bailey T.L."/>
            <person name="Bansal M."/>
            <person name="Baxter L."/>
            <person name="Beisel K.W."/>
            <person name="Bersano T."/>
            <person name="Bono H."/>
            <person name="Chalk A.M."/>
            <person name="Chiu K.P."/>
            <person name="Choudhary V."/>
            <person name="Christoffels A."/>
            <person name="Clutterbuck D.R."/>
            <person name="Crowe M.L."/>
            <person name="Dalla E."/>
            <person name="Dalrymple B.P."/>
            <person name="de Bono B."/>
            <person name="Della Gatta G."/>
            <person name="di Bernardo D."/>
            <person name="Down T."/>
            <person name="Engstrom P."/>
            <person name="Fagiolini M."/>
            <person name="Faulkner G."/>
            <person name="Fletcher C.F."/>
            <person name="Fukushima T."/>
            <person name="Furuno M."/>
            <person name="Futaki S."/>
            <person name="Gariboldi M."/>
            <person name="Georgii-Hemming P."/>
            <person name="Gingeras T.R."/>
            <person name="Gojobori T."/>
            <person name="Green R.E."/>
            <person name="Gustincich S."/>
            <person name="Harbers M."/>
            <person name="Hayashi Y."/>
            <person name="Hensch T.K."/>
            <person name="Hirokawa N."/>
            <person name="Hill D."/>
            <person name="Huminiecki L."/>
            <person name="Iacono M."/>
            <person name="Ikeo K."/>
            <person name="Iwama A."/>
            <person name="Ishikawa T."/>
            <person name="Jakt M."/>
            <person name="Kanapin A."/>
            <person name="Katoh M."/>
            <person name="Kawasawa Y."/>
            <person name="Kelso J."/>
            <person name="Kitamura H."/>
            <person name="Kitano H."/>
            <person name="Kollias G."/>
            <person name="Krishnan S.P."/>
            <person name="Kruger A."/>
            <person name="Kummerfeld S.K."/>
            <person name="Kurochkin I.V."/>
            <person name="Lareau L.F."/>
            <person name="Lazarevic D."/>
            <person name="Lipovich L."/>
            <person name="Liu J."/>
            <person name="Liuni S."/>
            <person name="McWilliam S."/>
            <person name="Madan Babu M."/>
            <person name="Madera M."/>
            <person name="Marchionni L."/>
            <person name="Matsuda H."/>
            <person name="Matsuzawa S."/>
            <person name="Miki H."/>
            <person name="Mignone F."/>
            <person name="Miyake S."/>
            <person name="Morris K."/>
            <person name="Mottagui-Tabar S."/>
            <person name="Mulder N."/>
            <person name="Nakano N."/>
            <person name="Nakauchi H."/>
            <person name="Ng P."/>
            <person name="Nilsson R."/>
            <person name="Nishiguchi S."/>
            <person name="Nishikawa S."/>
            <person name="Nori F."/>
            <person name="Ohara O."/>
            <person name="Okazaki Y."/>
            <person name="Orlando V."/>
            <person name="Pang K.C."/>
            <person name="Pavan W.J."/>
            <person name="Pavesi G."/>
            <person name="Pesole G."/>
            <person name="Petrovsky N."/>
            <person name="Piazza S."/>
            <person name="Reed J."/>
            <person name="Reid J.F."/>
            <person name="Ring B.Z."/>
            <person name="Ringwald M."/>
            <person name="Rost B."/>
            <person name="Ruan Y."/>
            <person name="Salzberg S.L."/>
            <person name="Sandelin A."/>
            <person name="Schneider C."/>
            <person name="Schoenbach C."/>
            <person name="Sekiguchi K."/>
            <person name="Semple C.A."/>
            <person name="Seno S."/>
            <person name="Sessa L."/>
            <person name="Sheng Y."/>
            <person name="Shibata Y."/>
            <person name="Shimada H."/>
            <person name="Shimada K."/>
            <person name="Silva D."/>
            <person name="Sinclair B."/>
            <person name="Sperling S."/>
            <person name="Stupka E."/>
            <person name="Sugiura K."/>
            <person name="Sultana R."/>
            <person name="Takenaka Y."/>
            <person name="Taki K."/>
            <person name="Tammoja K."/>
            <person name="Tan S.L."/>
            <person name="Tang S."/>
            <person name="Taylor M.S."/>
            <person name="Tegner J."/>
            <person name="Teichmann S.A."/>
            <person name="Ueda H.R."/>
            <person name="van Nimwegen E."/>
            <person name="Verardo R."/>
            <person name="Wei C.L."/>
            <person name="Yagi K."/>
            <person name="Yamanishi H."/>
            <person name="Zabarovsky E."/>
            <person name="Zhu S."/>
            <person name="Zimmer A."/>
            <person name="Hide W."/>
            <person name="Bult C."/>
            <person name="Grimmond S.M."/>
            <person name="Teasdale R.D."/>
            <person name="Liu E.T."/>
            <person name="Brusic V."/>
            <person name="Quackenbush J."/>
            <person name="Wahlestedt C."/>
            <person name="Mattick J.S."/>
            <person name="Hume D.A."/>
            <person name="Kai C."/>
            <person name="Sasaki D."/>
            <person name="Tomaru Y."/>
            <person name="Fukuda S."/>
            <person name="Kanamori-Katayama M."/>
            <person name="Suzuki M."/>
            <person name="Aoki J."/>
            <person name="Arakawa T."/>
            <person name="Iida J."/>
            <person name="Imamura K."/>
            <person name="Itoh M."/>
            <person name="Kato T."/>
            <person name="Kawaji H."/>
            <person name="Kawagashira N."/>
            <person name="Kawashima T."/>
            <person name="Kojima M."/>
            <person name="Kondo S."/>
            <person name="Konno H."/>
            <person name="Nakano K."/>
            <person name="Ninomiya N."/>
            <person name="Nishio T."/>
            <person name="Okada M."/>
            <person name="Plessy C."/>
            <person name="Shibata K."/>
            <person name="Shiraki T."/>
            <person name="Suzuki S."/>
            <person name="Tagami M."/>
            <person name="Waki K."/>
            <person name="Watahiki A."/>
            <person name="Okamura-Oho Y."/>
            <person name="Suzuki H."/>
            <person name="Kawai J."/>
            <person name="Hayashizaki Y."/>
        </authorList>
    </citation>
    <scope>NUCLEOTIDE SEQUENCE [LARGE SCALE MRNA] (ISOFORM 2)</scope>
    <source>
        <strain>C57BL/6J</strain>
        <tissue>Testis</tissue>
    </source>
</reference>
<reference key="2">
    <citation type="journal article" date="2004" name="Genome Res.">
        <title>The status, quality, and expansion of the NIH full-length cDNA project: the Mammalian Gene Collection (MGC).</title>
        <authorList>
            <consortium name="The MGC Project Team"/>
        </authorList>
    </citation>
    <scope>NUCLEOTIDE SEQUENCE [LARGE SCALE MRNA] (ISOFORM 1)</scope>
    <source>
        <tissue>Brain</tissue>
    </source>
</reference>
<evidence type="ECO:0000255" key="1">
    <source>
        <dbReference type="PROSITE-ProRule" id="PRU00116"/>
    </source>
</evidence>
<evidence type="ECO:0000256" key="2">
    <source>
        <dbReference type="SAM" id="MobiDB-lite"/>
    </source>
</evidence>
<evidence type="ECO:0000303" key="3">
    <source>
    </source>
</evidence>
<comment type="alternative products">
    <event type="alternative splicing"/>
    <isoform>
        <id>A6H6A4-1</id>
        <name>1</name>
        <sequence type="displayed"/>
    </isoform>
    <isoform>
        <id>A6H6A4-2</id>
        <name>2</name>
        <sequence type="described" ref="VSP_033339"/>
    </isoform>
</comment>
<gene>
    <name type="primary">Lrriq4</name>
</gene>
<keyword id="KW-0025">Alternative splicing</keyword>
<keyword id="KW-0433">Leucine-rich repeat</keyword>
<keyword id="KW-1185">Reference proteome</keyword>
<keyword id="KW-0677">Repeat</keyword>
<name>LRIQ4_MOUSE</name>
<organism>
    <name type="scientific">Mus musculus</name>
    <name type="common">Mouse</name>
    <dbReference type="NCBI Taxonomy" id="10090"/>
    <lineage>
        <taxon>Eukaryota</taxon>
        <taxon>Metazoa</taxon>
        <taxon>Chordata</taxon>
        <taxon>Craniata</taxon>
        <taxon>Vertebrata</taxon>
        <taxon>Euteleostomi</taxon>
        <taxon>Mammalia</taxon>
        <taxon>Eutheria</taxon>
        <taxon>Euarchontoglires</taxon>
        <taxon>Glires</taxon>
        <taxon>Rodentia</taxon>
        <taxon>Myomorpha</taxon>
        <taxon>Muroidea</taxon>
        <taxon>Muridae</taxon>
        <taxon>Murinae</taxon>
        <taxon>Mus</taxon>
        <taxon>Mus</taxon>
    </lineage>
</organism>
<dbReference type="EMBL" id="AK015024">
    <property type="protein sequence ID" value="BAB29680.1"/>
    <property type="molecule type" value="mRNA"/>
</dbReference>
<dbReference type="EMBL" id="BC145806">
    <property type="protein sequence ID" value="AAI45807.1"/>
    <property type="molecule type" value="mRNA"/>
</dbReference>
<dbReference type="CCDS" id="CCDS38406.1">
    <molecule id="A6H6A4-1"/>
</dbReference>
<dbReference type="CCDS" id="CCDS71229.1">
    <molecule id="A6H6A4-2"/>
</dbReference>
<dbReference type="RefSeq" id="NP_001277439.1">
    <molecule id="A6H6A4-2"/>
    <property type="nucleotide sequence ID" value="NM_001290510.2"/>
</dbReference>
<dbReference type="RefSeq" id="NP_080944.2">
    <molecule id="A6H6A4-1"/>
    <property type="nucleotide sequence ID" value="NM_026668.3"/>
</dbReference>
<dbReference type="SMR" id="A6H6A4"/>
<dbReference type="FunCoup" id="A6H6A4">
    <property type="interactions" value="322"/>
</dbReference>
<dbReference type="STRING" id="10090.ENSMUSP00000103902"/>
<dbReference type="PhosphoSitePlus" id="A6H6A4"/>
<dbReference type="SwissPalm" id="A6H6A4"/>
<dbReference type="PaxDb" id="10090-ENSMUSP00000103902"/>
<dbReference type="ProteomicsDB" id="292040">
    <molecule id="A6H6A4-1"/>
</dbReference>
<dbReference type="ProteomicsDB" id="292041">
    <molecule id="A6H6A4-2"/>
</dbReference>
<dbReference type="Antibodypedia" id="64434">
    <property type="antibodies" value="72 antibodies from 12 providers"/>
</dbReference>
<dbReference type="DNASU" id="68307"/>
<dbReference type="Ensembl" id="ENSMUST00000108265.3">
    <molecule id="A6H6A4-2"/>
    <property type="protein sequence ID" value="ENSMUSP00000103900.3"/>
    <property type="gene ID" value="ENSMUSG00000027703.17"/>
</dbReference>
<dbReference type="Ensembl" id="ENSMUST00000108267.8">
    <molecule id="A6H6A4-1"/>
    <property type="protein sequence ID" value="ENSMUSP00000103902.2"/>
    <property type="gene ID" value="ENSMUSG00000027703.17"/>
</dbReference>
<dbReference type="Ensembl" id="ENSMUST00000172350.8">
    <molecule id="A6H6A4-1"/>
    <property type="protein sequence ID" value="ENSMUSP00000127052.2"/>
    <property type="gene ID" value="ENSMUSG00000027703.17"/>
</dbReference>
<dbReference type="GeneID" id="68307"/>
<dbReference type="KEGG" id="mmu:68307"/>
<dbReference type="UCSC" id="uc008ovc.1">
    <molecule id="A6H6A4-1"/>
    <property type="organism name" value="mouse"/>
</dbReference>
<dbReference type="UCSC" id="uc008ovd.2">
    <molecule id="A6H6A4-2"/>
    <property type="organism name" value="mouse"/>
</dbReference>
<dbReference type="AGR" id="MGI:1915557"/>
<dbReference type="CTD" id="344657"/>
<dbReference type="MGI" id="MGI:1915557">
    <property type="gene designation" value="Lrriq4"/>
</dbReference>
<dbReference type="VEuPathDB" id="HostDB:ENSMUSG00000027703"/>
<dbReference type="eggNOG" id="KOG0619">
    <property type="taxonomic scope" value="Eukaryota"/>
</dbReference>
<dbReference type="GeneTree" id="ENSGT00940000161601"/>
<dbReference type="HOGENOM" id="CLU_000288_18_23_1"/>
<dbReference type="InParanoid" id="A6H6A4"/>
<dbReference type="OMA" id="PPKEVCA"/>
<dbReference type="OrthoDB" id="1394818at2759"/>
<dbReference type="PhylomeDB" id="A6H6A4"/>
<dbReference type="TreeFam" id="TF351429"/>
<dbReference type="BioGRID-ORCS" id="68307">
    <property type="hits" value="1 hit in 77 CRISPR screens"/>
</dbReference>
<dbReference type="PRO" id="PR:A6H6A4"/>
<dbReference type="Proteomes" id="UP000000589">
    <property type="component" value="Chromosome 3"/>
</dbReference>
<dbReference type="RNAct" id="A6H6A4">
    <property type="molecule type" value="protein"/>
</dbReference>
<dbReference type="Bgee" id="ENSMUSG00000027703">
    <property type="expression patterns" value="Expressed in spermatid and 8 other cell types or tissues"/>
</dbReference>
<dbReference type="CDD" id="cd23766">
    <property type="entry name" value="IQCG"/>
    <property type="match status" value="1"/>
</dbReference>
<dbReference type="Gene3D" id="3.80.10.10">
    <property type="entry name" value="Ribonuclease Inhibitor"/>
    <property type="match status" value="3"/>
</dbReference>
<dbReference type="InterPro" id="IPR000048">
    <property type="entry name" value="IQ_motif_EF-hand-BS"/>
</dbReference>
<dbReference type="InterPro" id="IPR001611">
    <property type="entry name" value="Leu-rich_rpt"/>
</dbReference>
<dbReference type="InterPro" id="IPR003591">
    <property type="entry name" value="Leu-rich_rpt_typical-subtyp"/>
</dbReference>
<dbReference type="InterPro" id="IPR032675">
    <property type="entry name" value="LRR_dom_sf"/>
</dbReference>
<dbReference type="InterPro" id="IPR055414">
    <property type="entry name" value="LRR_R13L4/SHOC2-like"/>
</dbReference>
<dbReference type="InterPro" id="IPR052595">
    <property type="entry name" value="LRRC69/RLP"/>
</dbReference>
<dbReference type="PANTHER" id="PTHR48057">
    <property type="entry name" value="LEUCINE-RICH REPEAT SERINE/THREONINE-PROTEIN KINASE 1"/>
    <property type="match status" value="1"/>
</dbReference>
<dbReference type="PANTHER" id="PTHR48057:SF7">
    <property type="entry name" value="LEUCINE-RICH REPEAT SERINE_THREONINE-PROTEIN KINASE 1"/>
    <property type="match status" value="1"/>
</dbReference>
<dbReference type="Pfam" id="PF00612">
    <property type="entry name" value="IQ"/>
    <property type="match status" value="1"/>
</dbReference>
<dbReference type="Pfam" id="PF00560">
    <property type="entry name" value="LRR_1"/>
    <property type="match status" value="1"/>
</dbReference>
<dbReference type="Pfam" id="PF23598">
    <property type="entry name" value="LRR_14"/>
    <property type="match status" value="1"/>
</dbReference>
<dbReference type="Pfam" id="PF13855">
    <property type="entry name" value="LRR_8"/>
    <property type="match status" value="2"/>
</dbReference>
<dbReference type="SMART" id="SM00364">
    <property type="entry name" value="LRR_BAC"/>
    <property type="match status" value="9"/>
</dbReference>
<dbReference type="SMART" id="SM00365">
    <property type="entry name" value="LRR_SD22"/>
    <property type="match status" value="7"/>
</dbReference>
<dbReference type="SMART" id="SM00369">
    <property type="entry name" value="LRR_TYP"/>
    <property type="match status" value="13"/>
</dbReference>
<dbReference type="SUPFAM" id="SSF52058">
    <property type="entry name" value="L domain-like"/>
    <property type="match status" value="2"/>
</dbReference>
<dbReference type="PROSITE" id="PS50096">
    <property type="entry name" value="IQ"/>
    <property type="match status" value="1"/>
</dbReference>
<dbReference type="PROSITE" id="PS51450">
    <property type="entry name" value="LRR"/>
    <property type="match status" value="17"/>
</dbReference>
<accession>A6H6A4</accession>
<accession>Q9D5Q5</accession>
<sequence length="596" mass="68010">MHHSSSGSRCVLQNGLELTVILPRLHRFDIIDTFKTLTKELLRQEHLPKVLQKKEPHQLTDRTFFIDGSNQGLKTIPSEILALKELEEVHLENNQIAEIPQGIQQLQNTKVLYLHNNSLQDLCPELGALSSLESLDLSGNPLVISSLHVVSRLRTLRELRLYRTGLTEIPTGICKSLHHLELFGLSENFLESLPEEIVNQTKLREIYLKQNHFEVFPCDLCVLYNLEVIDLDENKLKSIPGDIGHLVRLQKFYVASNHLMSLPESLSQCSKLSVLDLTHNSIHSLPSSLELLTELTEVGLSGNRLEKVPRLLCSWVSLHLLYLRNTSLHGLRDSFKRLINLRFLDLSQNHIEHFPVQICALKNLEILALDDNKVRQLPPSISLLSNLKILGLTGNDLLSFPEEIFSLISLEKLYIGQDQGSKLSSLPENIKRLMNLKELYIENNRLEQLPASLGLMPNLEVLDCRHNLLKQLPDAICRTRNLRELLLEDNLLCCLPENLDHLVNLKVLTLMNNPMVDPPIYVCNQGNEAIWKHLKENRIRKMMATTIQAWWRGIMVRKGYGSYEELLKARKKGKSPPKDKKGKKAAKGKPEKGNKK</sequence>
<proteinExistence type="evidence at transcript level"/>
<feature type="chain" id="PRO_0000332139" description="Leucine-rich repeat and IQ domain-containing protein 4">
    <location>
        <begin position="1"/>
        <end position="596"/>
    </location>
</feature>
<feature type="repeat" description="LRR 1">
    <location>
        <begin position="22"/>
        <end position="44"/>
    </location>
</feature>
<feature type="repeat" description="LRR 2">
    <location>
        <begin position="59"/>
        <end position="83"/>
    </location>
</feature>
<feature type="repeat" description="LRR 3">
    <location>
        <begin position="84"/>
        <end position="106"/>
    </location>
</feature>
<feature type="repeat" description="LRR 4">
    <location>
        <begin position="108"/>
        <end position="129"/>
    </location>
</feature>
<feature type="repeat" description="LRR 5">
    <location>
        <begin position="130"/>
        <end position="152"/>
    </location>
</feature>
<feature type="repeat" description="LRR 6">
    <location>
        <begin position="153"/>
        <end position="176"/>
    </location>
</feature>
<feature type="repeat" description="LRR 7">
    <location>
        <begin position="177"/>
        <end position="200"/>
    </location>
</feature>
<feature type="repeat" description="LRR 8">
    <location>
        <begin position="202"/>
        <end position="223"/>
    </location>
</feature>
<feature type="repeat" description="LRR 9">
    <location>
        <begin position="224"/>
        <end position="246"/>
    </location>
</feature>
<feature type="repeat" description="LRR 10">
    <location>
        <begin position="248"/>
        <end position="269"/>
    </location>
</feature>
<feature type="repeat" description="LRR 11">
    <location>
        <begin position="270"/>
        <end position="293"/>
    </location>
</feature>
<feature type="repeat" description="LRR 12">
    <location>
        <begin position="295"/>
        <end position="315"/>
    </location>
</feature>
<feature type="repeat" description="LRR 13">
    <location>
        <begin position="317"/>
        <end position="337"/>
    </location>
</feature>
<feature type="repeat" description="LRR 14">
    <location>
        <begin position="338"/>
        <end position="361"/>
    </location>
</feature>
<feature type="repeat" description="LRR 15">
    <location>
        <begin position="362"/>
        <end position="384"/>
    </location>
</feature>
<feature type="repeat" description="LRR 16">
    <location>
        <begin position="385"/>
        <end position="407"/>
    </location>
</feature>
<feature type="repeat" description="LRR 17">
    <location>
        <begin position="410"/>
        <end position="433"/>
    </location>
</feature>
<feature type="repeat" description="LRR 18">
    <location>
        <begin position="434"/>
        <end position="457"/>
    </location>
</feature>
<feature type="repeat" description="LRR 19">
    <location>
        <begin position="459"/>
        <end position="479"/>
    </location>
</feature>
<feature type="repeat" description="LRR 20">
    <location>
        <begin position="480"/>
        <end position="502"/>
    </location>
</feature>
<feature type="repeat" description="LRR 21">
    <location>
        <begin position="504"/>
        <end position="525"/>
    </location>
</feature>
<feature type="repeat" description="LRR 22">
    <location>
        <begin position="527"/>
        <end position="549"/>
    </location>
</feature>
<feature type="domain" description="IQ" evidence="1">
    <location>
        <begin position="540"/>
        <end position="569"/>
    </location>
</feature>
<feature type="region of interest" description="Disordered" evidence="2">
    <location>
        <begin position="569"/>
        <end position="596"/>
    </location>
</feature>
<feature type="compositionally biased region" description="Basic residues" evidence="2">
    <location>
        <begin position="569"/>
        <end position="587"/>
    </location>
</feature>
<feature type="splice variant" id="VSP_033339" description="In isoform 2." evidence="3">
    <original>MHHSSSGSRCVLQNGLELTVILPRL</original>
    <variation>MAYPSAKLQM</variation>
    <location>
        <begin position="1"/>
        <end position="25"/>
    </location>
</feature>
<protein>
    <recommendedName>
        <fullName>Leucine-rich repeat and IQ domain-containing protein 4</fullName>
    </recommendedName>
</protein>